<reference key="1">
    <citation type="journal article" date="2008" name="PLoS Genet.">
        <title>Complete genome sequence of the complex carbohydrate-degrading marine bacterium, Saccharophagus degradans strain 2-40 T.</title>
        <authorList>
            <person name="Weiner R.M."/>
            <person name="Taylor L.E. II"/>
            <person name="Henrissat B."/>
            <person name="Hauser L."/>
            <person name="Land M."/>
            <person name="Coutinho P.M."/>
            <person name="Rancurel C."/>
            <person name="Saunders E.H."/>
            <person name="Longmire A.G."/>
            <person name="Zhang H."/>
            <person name="Bayer E.A."/>
            <person name="Gilbert H.J."/>
            <person name="Larimer F."/>
            <person name="Zhulin I.B."/>
            <person name="Ekborg N.A."/>
            <person name="Lamed R."/>
            <person name="Richardson P.M."/>
            <person name="Borovok I."/>
            <person name="Hutcheson S."/>
        </authorList>
    </citation>
    <scope>NUCLEOTIDE SEQUENCE [LARGE SCALE GENOMIC DNA]</scope>
    <source>
        <strain>2-40 / ATCC 43961 / DSM 17024</strain>
    </source>
</reference>
<evidence type="ECO:0000250" key="1"/>
<evidence type="ECO:0000255" key="2">
    <source>
        <dbReference type="HAMAP-Rule" id="MF_00062"/>
    </source>
</evidence>
<protein>
    <recommendedName>
        <fullName evidence="2">Sulfate adenylyltransferase subunit 1</fullName>
        <ecNumber evidence="2">2.7.7.4</ecNumber>
    </recommendedName>
    <alternativeName>
        <fullName evidence="2">ATP-sulfurylase large subunit</fullName>
    </alternativeName>
    <alternativeName>
        <fullName evidence="2">Sulfate adenylate transferase</fullName>
        <shortName evidence="2">SAT</shortName>
    </alternativeName>
</protein>
<accession>Q21IS6</accession>
<proteinExistence type="inferred from homology"/>
<comment type="function">
    <text evidence="2">With CysD forms the ATP sulfurylase (ATPS) that catalyzes the adenylation of sulfate producing adenosine 5'-phosphosulfate (APS) and diphosphate, the first enzymatic step in sulfur assimilation pathway. APS synthesis involves the formation of a high-energy phosphoric-sulfuric acid anhydride bond driven by GTP hydrolysis by CysN coupled to ATP hydrolysis by CysD.</text>
</comment>
<comment type="catalytic activity">
    <reaction evidence="2">
        <text>sulfate + ATP + H(+) = adenosine 5'-phosphosulfate + diphosphate</text>
        <dbReference type="Rhea" id="RHEA:18133"/>
        <dbReference type="ChEBI" id="CHEBI:15378"/>
        <dbReference type="ChEBI" id="CHEBI:16189"/>
        <dbReference type="ChEBI" id="CHEBI:30616"/>
        <dbReference type="ChEBI" id="CHEBI:33019"/>
        <dbReference type="ChEBI" id="CHEBI:58243"/>
        <dbReference type="EC" id="2.7.7.4"/>
    </reaction>
</comment>
<comment type="pathway">
    <text evidence="2">Sulfur metabolism; hydrogen sulfide biosynthesis; sulfite from sulfate: step 1/3.</text>
</comment>
<comment type="subunit">
    <text evidence="2">Heterodimer composed of CysD, the smaller subunit, and CysN.</text>
</comment>
<comment type="similarity">
    <text evidence="2">Belongs to the TRAFAC class translation factor GTPase superfamily. Classic translation factor GTPase family. CysN/NodQ subfamily.</text>
</comment>
<organism>
    <name type="scientific">Saccharophagus degradans (strain 2-40 / ATCC 43961 / DSM 17024)</name>
    <dbReference type="NCBI Taxonomy" id="203122"/>
    <lineage>
        <taxon>Bacteria</taxon>
        <taxon>Pseudomonadati</taxon>
        <taxon>Pseudomonadota</taxon>
        <taxon>Gammaproteobacteria</taxon>
        <taxon>Cellvibrionales</taxon>
        <taxon>Cellvibrionaceae</taxon>
        <taxon>Saccharophagus</taxon>
    </lineage>
</organism>
<dbReference type="EC" id="2.7.7.4" evidence="2"/>
<dbReference type="EMBL" id="CP000282">
    <property type="protein sequence ID" value="ABD81403.1"/>
    <property type="molecule type" value="Genomic_DNA"/>
</dbReference>
<dbReference type="RefSeq" id="WP_011468621.1">
    <property type="nucleotide sequence ID" value="NC_007912.1"/>
</dbReference>
<dbReference type="SMR" id="Q21IS6"/>
<dbReference type="STRING" id="203122.Sde_2143"/>
<dbReference type="GeneID" id="98613814"/>
<dbReference type="KEGG" id="sde:Sde_2143"/>
<dbReference type="eggNOG" id="COG2895">
    <property type="taxonomic scope" value="Bacteria"/>
</dbReference>
<dbReference type="HOGENOM" id="CLU_007265_5_2_6"/>
<dbReference type="OrthoDB" id="9804504at2"/>
<dbReference type="UniPathway" id="UPA00140">
    <property type="reaction ID" value="UER00204"/>
</dbReference>
<dbReference type="Proteomes" id="UP000001947">
    <property type="component" value="Chromosome"/>
</dbReference>
<dbReference type="GO" id="GO:0005524">
    <property type="term" value="F:ATP binding"/>
    <property type="evidence" value="ECO:0007669"/>
    <property type="project" value="UniProtKB-KW"/>
</dbReference>
<dbReference type="GO" id="GO:0005525">
    <property type="term" value="F:GTP binding"/>
    <property type="evidence" value="ECO:0007669"/>
    <property type="project" value="UniProtKB-UniRule"/>
</dbReference>
<dbReference type="GO" id="GO:0003924">
    <property type="term" value="F:GTPase activity"/>
    <property type="evidence" value="ECO:0007669"/>
    <property type="project" value="InterPro"/>
</dbReference>
<dbReference type="GO" id="GO:0004781">
    <property type="term" value="F:sulfate adenylyltransferase (ATP) activity"/>
    <property type="evidence" value="ECO:0007669"/>
    <property type="project" value="UniProtKB-UniRule"/>
</dbReference>
<dbReference type="GO" id="GO:0070814">
    <property type="term" value="P:hydrogen sulfide biosynthetic process"/>
    <property type="evidence" value="ECO:0007669"/>
    <property type="project" value="UniProtKB-UniRule"/>
</dbReference>
<dbReference type="GO" id="GO:0000103">
    <property type="term" value="P:sulfate assimilation"/>
    <property type="evidence" value="ECO:0007669"/>
    <property type="project" value="UniProtKB-UniRule"/>
</dbReference>
<dbReference type="CDD" id="cd04166">
    <property type="entry name" value="CysN_ATPS"/>
    <property type="match status" value="1"/>
</dbReference>
<dbReference type="CDD" id="cd03695">
    <property type="entry name" value="CysN_NodQ_II"/>
    <property type="match status" value="1"/>
</dbReference>
<dbReference type="CDD" id="cd04095">
    <property type="entry name" value="CysN_NoDQ_III"/>
    <property type="match status" value="1"/>
</dbReference>
<dbReference type="FunFam" id="2.40.30.10:FF:000027">
    <property type="entry name" value="Sulfate adenylyltransferase subunit 1"/>
    <property type="match status" value="1"/>
</dbReference>
<dbReference type="FunFam" id="3.40.50.300:FF:000119">
    <property type="entry name" value="Sulfate adenylyltransferase subunit 1"/>
    <property type="match status" value="1"/>
</dbReference>
<dbReference type="Gene3D" id="3.40.50.300">
    <property type="entry name" value="P-loop containing nucleotide triphosphate hydrolases"/>
    <property type="match status" value="1"/>
</dbReference>
<dbReference type="Gene3D" id="2.40.30.10">
    <property type="entry name" value="Translation factors"/>
    <property type="match status" value="2"/>
</dbReference>
<dbReference type="HAMAP" id="MF_00062">
    <property type="entry name" value="Sulf_adenylyltr_sub1"/>
    <property type="match status" value="1"/>
</dbReference>
<dbReference type="InterPro" id="IPR041757">
    <property type="entry name" value="CysN_GTP-bd"/>
</dbReference>
<dbReference type="InterPro" id="IPR044138">
    <property type="entry name" value="CysN_II"/>
</dbReference>
<dbReference type="InterPro" id="IPR044139">
    <property type="entry name" value="CysN_NoDQ_III"/>
</dbReference>
<dbReference type="InterPro" id="IPR031157">
    <property type="entry name" value="G_TR_CS"/>
</dbReference>
<dbReference type="InterPro" id="IPR054696">
    <property type="entry name" value="GTP-eEF1A_C"/>
</dbReference>
<dbReference type="InterPro" id="IPR027417">
    <property type="entry name" value="P-loop_NTPase"/>
</dbReference>
<dbReference type="InterPro" id="IPR005225">
    <property type="entry name" value="Small_GTP-bd"/>
</dbReference>
<dbReference type="InterPro" id="IPR011779">
    <property type="entry name" value="SO4_adenylTrfase_lsu"/>
</dbReference>
<dbReference type="InterPro" id="IPR000795">
    <property type="entry name" value="T_Tr_GTP-bd_dom"/>
</dbReference>
<dbReference type="InterPro" id="IPR050100">
    <property type="entry name" value="TRAFAC_GTPase_members"/>
</dbReference>
<dbReference type="InterPro" id="IPR009000">
    <property type="entry name" value="Transl_B-barrel_sf"/>
</dbReference>
<dbReference type="InterPro" id="IPR009001">
    <property type="entry name" value="Transl_elong_EF1A/Init_IF2_C"/>
</dbReference>
<dbReference type="NCBIfam" id="TIGR02034">
    <property type="entry name" value="CysN"/>
    <property type="match status" value="1"/>
</dbReference>
<dbReference type="NCBIfam" id="NF003478">
    <property type="entry name" value="PRK05124.1"/>
    <property type="match status" value="1"/>
</dbReference>
<dbReference type="NCBIfam" id="NF004035">
    <property type="entry name" value="PRK05506.1"/>
    <property type="match status" value="1"/>
</dbReference>
<dbReference type="NCBIfam" id="TIGR00231">
    <property type="entry name" value="small_GTP"/>
    <property type="match status" value="1"/>
</dbReference>
<dbReference type="PANTHER" id="PTHR23115">
    <property type="entry name" value="TRANSLATION FACTOR"/>
    <property type="match status" value="1"/>
</dbReference>
<dbReference type="Pfam" id="PF22594">
    <property type="entry name" value="GTP-eEF1A_C"/>
    <property type="match status" value="1"/>
</dbReference>
<dbReference type="Pfam" id="PF00009">
    <property type="entry name" value="GTP_EFTU"/>
    <property type="match status" value="1"/>
</dbReference>
<dbReference type="PRINTS" id="PR00315">
    <property type="entry name" value="ELONGATNFCT"/>
</dbReference>
<dbReference type="SUPFAM" id="SSF50465">
    <property type="entry name" value="EF-Tu/eEF-1alpha/eIF2-gamma C-terminal domain"/>
    <property type="match status" value="1"/>
</dbReference>
<dbReference type="SUPFAM" id="SSF52540">
    <property type="entry name" value="P-loop containing nucleoside triphosphate hydrolases"/>
    <property type="match status" value="1"/>
</dbReference>
<dbReference type="SUPFAM" id="SSF50447">
    <property type="entry name" value="Translation proteins"/>
    <property type="match status" value="1"/>
</dbReference>
<dbReference type="PROSITE" id="PS00301">
    <property type="entry name" value="G_TR_1"/>
    <property type="match status" value="1"/>
</dbReference>
<dbReference type="PROSITE" id="PS51722">
    <property type="entry name" value="G_TR_2"/>
    <property type="match status" value="1"/>
</dbReference>
<gene>
    <name evidence="2" type="primary">cysN</name>
    <name type="ordered locus">Sde_2143</name>
</gene>
<keyword id="KW-0067">ATP-binding</keyword>
<keyword id="KW-0342">GTP-binding</keyword>
<keyword id="KW-0547">Nucleotide-binding</keyword>
<keyword id="KW-0548">Nucleotidyltransferase</keyword>
<keyword id="KW-1185">Reference proteome</keyword>
<keyword id="KW-0808">Transferase</keyword>
<name>CYSN_SACD2</name>
<sequence>MSHQSDLIETDIDAYLAQHEQKELLRFLTCGSVDDGKSTLIGRLLHDSKMIYEDQLEAVRNDNSKHGTTGDKVDLALLVDGLQAEREQGITIDVAYRYFSTAKRKFIIADTPGHEQYTRNMATGASTCDMAIILIDARHGVMTQTRRHSFIASLLGIKHLVIAINKMDLVDYSQETFESIKQAYGEVAKTLGQENLYFVPMSALDGDNVVNKSENMPWYTGESLMEILESVQITGAKNLKDFRYPVQYVNRPHLNFRGFCGTVASGEVKVGDEIRVLPSGKTSKVKEIVTYDGNLDKAFIDQAVTITLEDEIDISRGDMLVHAASDVQMSNRFKAHLVWMSETNMAPGKEYLFKFATKVTPGSVAAIDYRVDVNTFEHSSIEKMELNDIAVVELALDQQVVAESYQVNRGTGAFIVIDRLTNITVAAGMVIDVLEESSEAKSDFSAFEVELNALVRKHFPHWDAKDISKLL</sequence>
<feature type="chain" id="PRO_1000008906" description="Sulfate adenylyltransferase subunit 1">
    <location>
        <begin position="1"/>
        <end position="471"/>
    </location>
</feature>
<feature type="domain" description="tr-type G">
    <location>
        <begin position="22"/>
        <end position="237"/>
    </location>
</feature>
<feature type="region of interest" description="G1" evidence="1">
    <location>
        <begin position="31"/>
        <end position="38"/>
    </location>
</feature>
<feature type="region of interest" description="G2" evidence="1">
    <location>
        <begin position="89"/>
        <end position="93"/>
    </location>
</feature>
<feature type="region of interest" description="G3" evidence="1">
    <location>
        <begin position="110"/>
        <end position="113"/>
    </location>
</feature>
<feature type="region of interest" description="G4" evidence="1">
    <location>
        <begin position="165"/>
        <end position="168"/>
    </location>
</feature>
<feature type="region of interest" description="G5" evidence="1">
    <location>
        <begin position="202"/>
        <end position="204"/>
    </location>
</feature>
<feature type="binding site" evidence="2">
    <location>
        <begin position="31"/>
        <end position="38"/>
    </location>
    <ligand>
        <name>GTP</name>
        <dbReference type="ChEBI" id="CHEBI:37565"/>
    </ligand>
</feature>
<feature type="binding site" evidence="2">
    <location>
        <begin position="110"/>
        <end position="114"/>
    </location>
    <ligand>
        <name>GTP</name>
        <dbReference type="ChEBI" id="CHEBI:37565"/>
    </ligand>
</feature>
<feature type="binding site" evidence="2">
    <location>
        <begin position="165"/>
        <end position="168"/>
    </location>
    <ligand>
        <name>GTP</name>
        <dbReference type="ChEBI" id="CHEBI:37565"/>
    </ligand>
</feature>